<name>IF4A_CAEEL</name>
<keyword id="KW-0025">Alternative splicing</keyword>
<keyword id="KW-0067">ATP-binding</keyword>
<keyword id="KW-0347">Helicase</keyword>
<keyword id="KW-0378">Hydrolase</keyword>
<keyword id="KW-0396">Initiation factor</keyword>
<keyword id="KW-0547">Nucleotide-binding</keyword>
<keyword id="KW-0648">Protein biosynthesis</keyword>
<keyword id="KW-1185">Reference proteome</keyword>
<keyword id="KW-0694">RNA-binding</keyword>
<accession>P27639</accession>
<accession>Q4TTC4</accession>
<dbReference type="EC" id="3.6.4.13"/>
<dbReference type="EMBL" id="Z12116">
    <property type="protein sequence ID" value="CAA78102.1"/>
    <property type="molecule type" value="mRNA"/>
</dbReference>
<dbReference type="EMBL" id="FO081266">
    <property type="protein sequence ID" value="CCD70313.1"/>
    <property type="molecule type" value="Genomic_DNA"/>
</dbReference>
<dbReference type="EMBL" id="FO081266">
    <property type="protein sequence ID" value="CCD70314.1"/>
    <property type="molecule type" value="Genomic_DNA"/>
</dbReference>
<dbReference type="PIR" id="S26281">
    <property type="entry name" value="S26281"/>
</dbReference>
<dbReference type="RefSeq" id="NP_001022623.1">
    <molecule id="P27639-1"/>
    <property type="nucleotide sequence ID" value="NM_001027452.4"/>
</dbReference>
<dbReference type="RefSeq" id="NP_001022624.1">
    <molecule id="P27639-2"/>
    <property type="nucleotide sequence ID" value="NM_001027453.4"/>
</dbReference>
<dbReference type="SMR" id="P27639"/>
<dbReference type="BioGRID" id="41180">
    <property type="interactions" value="19"/>
</dbReference>
<dbReference type="DIP" id="DIP-27102N"/>
<dbReference type="FunCoup" id="P27639">
    <property type="interactions" value="2741"/>
</dbReference>
<dbReference type="IntAct" id="P27639">
    <property type="interactions" value="1"/>
</dbReference>
<dbReference type="STRING" id="6239.F57B9.6a.2"/>
<dbReference type="PaxDb" id="6239-F57B9.6a.2"/>
<dbReference type="PeptideAtlas" id="P27639"/>
<dbReference type="EnsemblMetazoa" id="F57B9.6a.1">
    <molecule id="P27639-1"/>
    <property type="protein sequence ID" value="F57B9.6a.1"/>
    <property type="gene ID" value="WBGene00002083"/>
</dbReference>
<dbReference type="EnsemblMetazoa" id="F57B9.6b.1">
    <molecule id="P27639-2"/>
    <property type="protein sequence ID" value="F57B9.6b.1"/>
    <property type="gene ID" value="WBGene00002083"/>
</dbReference>
<dbReference type="GeneID" id="175966"/>
<dbReference type="KEGG" id="cel:CELE_F57B9.6"/>
<dbReference type="UCSC" id="F57B9.6a.1">
    <molecule id="P27639-1"/>
    <property type="organism name" value="c. elegans"/>
</dbReference>
<dbReference type="AGR" id="WB:WBGene00002083"/>
<dbReference type="CTD" id="175966"/>
<dbReference type="WormBase" id="F57B9.6a">
    <molecule id="P27639-1"/>
    <property type="protein sequence ID" value="CE01341"/>
    <property type="gene ID" value="WBGene00002083"/>
    <property type="gene designation" value="inf-1"/>
</dbReference>
<dbReference type="WormBase" id="F57B9.6b">
    <molecule id="P27639-2"/>
    <property type="protein sequence ID" value="CE38524"/>
    <property type="gene ID" value="WBGene00002083"/>
    <property type="gene designation" value="inf-1"/>
</dbReference>
<dbReference type="eggNOG" id="KOG0327">
    <property type="taxonomic scope" value="Eukaryota"/>
</dbReference>
<dbReference type="GeneTree" id="ENSGT00940000153889"/>
<dbReference type="HOGENOM" id="CLU_003041_1_0_1"/>
<dbReference type="InParanoid" id="P27639"/>
<dbReference type="OMA" id="FGCQALV"/>
<dbReference type="OrthoDB" id="10265785at2759"/>
<dbReference type="PhylomeDB" id="P27639"/>
<dbReference type="Reactome" id="R-CEL-1169408">
    <property type="pathway name" value="ISG15 antiviral mechanism"/>
</dbReference>
<dbReference type="Reactome" id="R-CEL-156827">
    <property type="pathway name" value="L13a-mediated translational silencing of Ceruloplasmin expression"/>
</dbReference>
<dbReference type="Reactome" id="R-CEL-72649">
    <property type="pathway name" value="Translation initiation complex formation"/>
</dbReference>
<dbReference type="Reactome" id="R-CEL-72662">
    <property type="pathway name" value="Activation of the mRNA upon binding of the cap-binding complex and eIFs, and subsequent binding to 43S"/>
</dbReference>
<dbReference type="Reactome" id="R-CEL-72702">
    <property type="pathway name" value="Ribosomal scanning and start codon recognition"/>
</dbReference>
<dbReference type="PRO" id="PR:P27639"/>
<dbReference type="Proteomes" id="UP000001940">
    <property type="component" value="Chromosome III"/>
</dbReference>
<dbReference type="Bgee" id="WBGene00002083">
    <property type="expression patterns" value="Expressed in germ line (C elegans) and 5 other cell types or tissues"/>
</dbReference>
<dbReference type="GO" id="GO:0010494">
    <property type="term" value="C:cytoplasmic stress granule"/>
    <property type="evidence" value="ECO:0000318"/>
    <property type="project" value="GO_Central"/>
</dbReference>
<dbReference type="GO" id="GO:0043186">
    <property type="term" value="C:P granule"/>
    <property type="evidence" value="ECO:0007669"/>
    <property type="project" value="UniProtKB-ARBA"/>
</dbReference>
<dbReference type="GO" id="GO:0005524">
    <property type="term" value="F:ATP binding"/>
    <property type="evidence" value="ECO:0007669"/>
    <property type="project" value="UniProtKB-KW"/>
</dbReference>
<dbReference type="GO" id="GO:0016887">
    <property type="term" value="F:ATP hydrolysis activity"/>
    <property type="evidence" value="ECO:0007669"/>
    <property type="project" value="RHEA"/>
</dbReference>
<dbReference type="GO" id="GO:0003723">
    <property type="term" value="F:RNA binding"/>
    <property type="evidence" value="ECO:0007669"/>
    <property type="project" value="UniProtKB-KW"/>
</dbReference>
<dbReference type="GO" id="GO:0003724">
    <property type="term" value="F:RNA helicase activity"/>
    <property type="evidence" value="ECO:0007669"/>
    <property type="project" value="UniProtKB-EC"/>
</dbReference>
<dbReference type="GO" id="GO:0003743">
    <property type="term" value="F:translation initiation factor activity"/>
    <property type="evidence" value="ECO:0000318"/>
    <property type="project" value="GO_Central"/>
</dbReference>
<dbReference type="GO" id="GO:0002183">
    <property type="term" value="P:cytoplasmic translational initiation"/>
    <property type="evidence" value="ECO:0000318"/>
    <property type="project" value="GO_Central"/>
</dbReference>
<dbReference type="CDD" id="cd18046">
    <property type="entry name" value="DEADc_EIF4AII_EIF4AI_DDX2"/>
    <property type="match status" value="1"/>
</dbReference>
<dbReference type="CDD" id="cd18787">
    <property type="entry name" value="SF2_C_DEAD"/>
    <property type="match status" value="1"/>
</dbReference>
<dbReference type="FunFam" id="3.40.50.300:FF:000089">
    <property type="entry name" value="Eukaryotic initiation factor 4A-II"/>
    <property type="match status" value="1"/>
</dbReference>
<dbReference type="FunFam" id="3.40.50.300:FF:000031">
    <property type="entry name" value="Eukaryotic initiation factor 4A-III"/>
    <property type="match status" value="1"/>
</dbReference>
<dbReference type="Gene3D" id="3.40.50.300">
    <property type="entry name" value="P-loop containing nucleotide triphosphate hydrolases"/>
    <property type="match status" value="2"/>
</dbReference>
<dbReference type="InterPro" id="IPR011545">
    <property type="entry name" value="DEAD/DEAH_box_helicase_dom"/>
</dbReference>
<dbReference type="InterPro" id="IPR044728">
    <property type="entry name" value="EIF4A_DEADc"/>
</dbReference>
<dbReference type="InterPro" id="IPR014001">
    <property type="entry name" value="Helicase_ATP-bd"/>
</dbReference>
<dbReference type="InterPro" id="IPR001650">
    <property type="entry name" value="Helicase_C-like"/>
</dbReference>
<dbReference type="InterPro" id="IPR027417">
    <property type="entry name" value="P-loop_NTPase"/>
</dbReference>
<dbReference type="InterPro" id="IPR000629">
    <property type="entry name" value="RNA-helicase_DEAD-box_CS"/>
</dbReference>
<dbReference type="InterPro" id="IPR014014">
    <property type="entry name" value="RNA_helicase_DEAD_Q_motif"/>
</dbReference>
<dbReference type="PANTHER" id="PTHR47958">
    <property type="entry name" value="ATP-DEPENDENT RNA HELICASE DBP3"/>
    <property type="match status" value="1"/>
</dbReference>
<dbReference type="Pfam" id="PF00270">
    <property type="entry name" value="DEAD"/>
    <property type="match status" value="1"/>
</dbReference>
<dbReference type="Pfam" id="PF00271">
    <property type="entry name" value="Helicase_C"/>
    <property type="match status" value="1"/>
</dbReference>
<dbReference type="SMART" id="SM00487">
    <property type="entry name" value="DEXDc"/>
    <property type="match status" value="1"/>
</dbReference>
<dbReference type="SMART" id="SM00490">
    <property type="entry name" value="HELICc"/>
    <property type="match status" value="1"/>
</dbReference>
<dbReference type="SUPFAM" id="SSF52540">
    <property type="entry name" value="P-loop containing nucleoside triphosphate hydrolases"/>
    <property type="match status" value="1"/>
</dbReference>
<dbReference type="PROSITE" id="PS00039">
    <property type="entry name" value="DEAD_ATP_HELICASE"/>
    <property type="match status" value="1"/>
</dbReference>
<dbReference type="PROSITE" id="PS51192">
    <property type="entry name" value="HELICASE_ATP_BIND_1"/>
    <property type="match status" value="1"/>
</dbReference>
<dbReference type="PROSITE" id="PS51194">
    <property type="entry name" value="HELICASE_CTER"/>
    <property type="match status" value="1"/>
</dbReference>
<dbReference type="PROSITE" id="PS51195">
    <property type="entry name" value="Q_MOTIF"/>
    <property type="match status" value="1"/>
</dbReference>
<reference key="1">
    <citation type="journal article" date="1992" name="Nucleic Acids Res.">
        <title>Caenorhabditis cDNA encodes an eIF-4A-like protein.</title>
        <authorList>
            <person name="Roussell D.L."/>
            <person name="Bennett K.L."/>
        </authorList>
    </citation>
    <scope>NUCLEOTIDE SEQUENCE [MRNA] (ISOFORM A)</scope>
    <source>
        <strain>Bristol N2</strain>
    </source>
</reference>
<reference key="2">
    <citation type="journal article" date="1998" name="Science">
        <title>Genome sequence of the nematode C. elegans: a platform for investigating biology.</title>
        <authorList>
            <consortium name="The C. elegans sequencing consortium"/>
        </authorList>
    </citation>
    <scope>NUCLEOTIDE SEQUENCE [LARGE SCALE GENOMIC DNA]</scope>
    <scope>ALTERNATIVE SPLICING</scope>
    <source>
        <strain>Bristol N2</strain>
    </source>
</reference>
<organism>
    <name type="scientific">Caenorhabditis elegans</name>
    <dbReference type="NCBI Taxonomy" id="6239"/>
    <lineage>
        <taxon>Eukaryota</taxon>
        <taxon>Metazoa</taxon>
        <taxon>Ecdysozoa</taxon>
        <taxon>Nematoda</taxon>
        <taxon>Chromadorea</taxon>
        <taxon>Rhabditida</taxon>
        <taxon>Rhabditina</taxon>
        <taxon>Rhabditomorpha</taxon>
        <taxon>Rhabditoidea</taxon>
        <taxon>Rhabditidae</taxon>
        <taxon>Peloderinae</taxon>
        <taxon>Caenorhabditis</taxon>
    </lineage>
</organism>
<sequence>MTDVKNDVNVSSVVDADGLIEGNYDQVVESFDDMELKEELLRGIYGFGFEKPSAIQKRAIVPCTTGKDVIAQAQSGTGKTATFSVSILQRIDHEDPHVQALVMAPTRELAQQIQKVMSALGEYLNVNILPCIGGTSVRDDQRKLEAGIHVVVGTPGRVGDMINRNALDTSRIKMFVLDEADEMLSRGFKDQIYEVFRSMPQDVQVVLLSATMPSEVLDVTNRFMRNPIRILVKKDELTLEGIRQFYINVQKDEWKFDCLCDLYNVVNVTQAVIFCNTRRKVDTLTEKMTENQFTVSCLHGDMDQAERDTIMREFRSGSSRVLITTDILARGIDVQQVSLVINYDLPSNRENYIHRIGRSGRFGRKGVAINFVTENDARQLKEIESYYTTQIEEMPESIADLI</sequence>
<gene>
    <name type="primary">inf-1</name>
    <name type="ORF">F57B9.6</name>
</gene>
<protein>
    <recommendedName>
        <fullName>Eukaryotic initiation factor 4A</fullName>
        <shortName>eIF-4A</shortName>
        <ecNumber>3.6.4.13</ecNumber>
    </recommendedName>
    <alternativeName>
        <fullName>ATP-dependent RNA helicase eIF4A</fullName>
    </alternativeName>
    <alternativeName>
        <fullName>Initiation factor 1</fullName>
    </alternativeName>
</protein>
<evidence type="ECO:0000250" key="1"/>
<evidence type="ECO:0000255" key="2">
    <source>
        <dbReference type="PROSITE-ProRule" id="PRU00541"/>
    </source>
</evidence>
<evidence type="ECO:0000255" key="3">
    <source>
        <dbReference type="PROSITE-ProRule" id="PRU00542"/>
    </source>
</evidence>
<evidence type="ECO:0000305" key="4"/>
<proteinExistence type="evidence at transcript level"/>
<feature type="chain" id="PRO_0000054945" description="Eukaryotic initiation factor 4A">
    <location>
        <begin position="1"/>
        <end position="402"/>
    </location>
</feature>
<feature type="domain" description="Helicase ATP-binding" evidence="2">
    <location>
        <begin position="60"/>
        <end position="230"/>
    </location>
</feature>
<feature type="domain" description="Helicase C-terminal" evidence="3">
    <location>
        <begin position="241"/>
        <end position="402"/>
    </location>
</feature>
<feature type="short sequence motif" description="Q motif">
    <location>
        <begin position="29"/>
        <end position="57"/>
    </location>
</feature>
<feature type="short sequence motif" description="DEAD box">
    <location>
        <begin position="178"/>
        <end position="181"/>
    </location>
</feature>
<feature type="binding site" evidence="2">
    <location>
        <begin position="73"/>
        <end position="80"/>
    </location>
    <ligand>
        <name>ATP</name>
        <dbReference type="ChEBI" id="CHEBI:30616"/>
    </ligand>
</feature>
<feature type="splice variant" id="VSP_020640" description="In isoform b." evidence="4">
    <location>
        <begin position="1"/>
        <end position="287"/>
    </location>
</feature>
<comment type="function">
    <text>ATP-dependent RNA helicase which is a subunit of the eIF4F complex involved in cap recognition and is required for mRNA binding to ribosome. In the current model of translation initiation, eIF4A unwinds RNA secondary structures in the 5'-UTR of mRNAs which is necessary to allow efficient binding of the small ribosomal subunit, and subsequent scanning for the initiator codon.</text>
</comment>
<comment type="catalytic activity">
    <reaction>
        <text>ATP + H2O = ADP + phosphate + H(+)</text>
        <dbReference type="Rhea" id="RHEA:13065"/>
        <dbReference type="ChEBI" id="CHEBI:15377"/>
        <dbReference type="ChEBI" id="CHEBI:15378"/>
        <dbReference type="ChEBI" id="CHEBI:30616"/>
        <dbReference type="ChEBI" id="CHEBI:43474"/>
        <dbReference type="ChEBI" id="CHEBI:456216"/>
        <dbReference type="EC" id="3.6.4.13"/>
    </reaction>
</comment>
<comment type="subunit">
    <text evidence="1">eIF4F is a multi-subunit complex, the composition of which varies with external and internal environmental conditions. It is composed of at least EIF4A, EIF4E and EIF4G (By similarity).</text>
</comment>
<comment type="alternative products">
    <event type="alternative splicing"/>
    <isoform>
        <id>P27639-1</id>
        <name>a</name>
        <sequence type="displayed"/>
    </isoform>
    <isoform>
        <id>P27639-2</id>
        <name>b</name>
        <sequence type="described" ref="VSP_020640"/>
    </isoform>
</comment>
<comment type="similarity">
    <text evidence="4">Belongs to the DEAD box helicase family. eIF4A subfamily.</text>
</comment>